<protein>
    <recommendedName>
        <fullName>Uncharacterized protein Rv0083</fullName>
    </recommendedName>
</protein>
<proteinExistence type="inferred from homology"/>
<feature type="chain" id="PRO_0000118049" description="Uncharacterized protein Rv0083">
    <location>
        <begin position="1"/>
        <end position="640"/>
    </location>
</feature>
<feature type="transmembrane region" description="Helical" evidence="1">
    <location>
        <begin position="8"/>
        <end position="28"/>
    </location>
</feature>
<feature type="transmembrane region" description="Helical" evidence="1">
    <location>
        <begin position="52"/>
        <end position="72"/>
    </location>
</feature>
<feature type="transmembrane region" description="Helical" evidence="1">
    <location>
        <begin position="90"/>
        <end position="110"/>
    </location>
</feature>
<feature type="transmembrane region" description="Helical" evidence="1">
    <location>
        <begin position="136"/>
        <end position="156"/>
    </location>
</feature>
<feature type="transmembrane region" description="Helical" evidence="1">
    <location>
        <begin position="179"/>
        <end position="199"/>
    </location>
</feature>
<feature type="transmembrane region" description="Helical" evidence="1">
    <location>
        <begin position="208"/>
        <end position="228"/>
    </location>
</feature>
<feature type="transmembrane region" description="Helical" evidence="1">
    <location>
        <begin position="241"/>
        <end position="261"/>
    </location>
</feature>
<feature type="transmembrane region" description="Helical" evidence="1">
    <location>
        <begin position="277"/>
        <end position="297"/>
    </location>
</feature>
<feature type="transmembrane region" description="Helical" evidence="1">
    <location>
        <begin position="298"/>
        <end position="318"/>
    </location>
</feature>
<feature type="transmembrane region" description="Helical" evidence="1">
    <location>
        <begin position="352"/>
        <end position="372"/>
    </location>
</feature>
<feature type="transmembrane region" description="Helical" evidence="1">
    <location>
        <begin position="391"/>
        <end position="411"/>
    </location>
</feature>
<feature type="transmembrane region" description="Helical" evidence="1">
    <location>
        <begin position="446"/>
        <end position="466"/>
    </location>
</feature>
<feature type="transmembrane region" description="Helical" evidence="1">
    <location>
        <begin position="497"/>
        <end position="517"/>
    </location>
</feature>
<feature type="transmembrane region" description="Helical" evidence="1">
    <location>
        <begin position="619"/>
        <end position="639"/>
    </location>
</feature>
<reference key="1">
    <citation type="journal article" date="1998" name="Nature">
        <title>Deciphering the biology of Mycobacterium tuberculosis from the complete genome sequence.</title>
        <authorList>
            <person name="Cole S.T."/>
            <person name="Brosch R."/>
            <person name="Parkhill J."/>
            <person name="Garnier T."/>
            <person name="Churcher C.M."/>
            <person name="Harris D.E."/>
            <person name="Gordon S.V."/>
            <person name="Eiglmeier K."/>
            <person name="Gas S."/>
            <person name="Barry C.E. III"/>
            <person name="Tekaia F."/>
            <person name="Badcock K."/>
            <person name="Basham D."/>
            <person name="Brown D."/>
            <person name="Chillingworth T."/>
            <person name="Connor R."/>
            <person name="Davies R.M."/>
            <person name="Devlin K."/>
            <person name="Feltwell T."/>
            <person name="Gentles S."/>
            <person name="Hamlin N."/>
            <person name="Holroyd S."/>
            <person name="Hornsby T."/>
            <person name="Jagels K."/>
            <person name="Krogh A."/>
            <person name="McLean J."/>
            <person name="Moule S."/>
            <person name="Murphy L.D."/>
            <person name="Oliver S."/>
            <person name="Osborne J."/>
            <person name="Quail M.A."/>
            <person name="Rajandream M.A."/>
            <person name="Rogers J."/>
            <person name="Rutter S."/>
            <person name="Seeger K."/>
            <person name="Skelton S."/>
            <person name="Squares S."/>
            <person name="Squares R."/>
            <person name="Sulston J.E."/>
            <person name="Taylor K."/>
            <person name="Whitehead S."/>
            <person name="Barrell B.G."/>
        </authorList>
    </citation>
    <scope>NUCLEOTIDE SEQUENCE [LARGE SCALE GENOMIC DNA]</scope>
    <source>
        <strain>ATCC 25618 / H37Rv</strain>
    </source>
</reference>
<organism>
    <name type="scientific">Mycobacterium tuberculosis (strain ATCC 25618 / H37Rv)</name>
    <dbReference type="NCBI Taxonomy" id="83332"/>
    <lineage>
        <taxon>Bacteria</taxon>
        <taxon>Bacillati</taxon>
        <taxon>Actinomycetota</taxon>
        <taxon>Actinomycetes</taxon>
        <taxon>Mycobacteriales</taxon>
        <taxon>Mycobacteriaceae</taxon>
        <taxon>Mycobacterium</taxon>
        <taxon>Mycobacterium tuberculosis complex</taxon>
    </lineage>
</organism>
<dbReference type="EMBL" id="AL123456">
    <property type="protein sequence ID" value="CCP42808.1"/>
    <property type="molecule type" value="Genomic_DNA"/>
</dbReference>
<dbReference type="PIR" id="D70850">
    <property type="entry name" value="D70850"/>
</dbReference>
<dbReference type="RefSeq" id="NP_214597.1">
    <property type="nucleotide sequence ID" value="NC_000962.3"/>
</dbReference>
<dbReference type="RefSeq" id="WP_003907280.1">
    <property type="nucleotide sequence ID" value="NZ_NVQJ01000005.1"/>
</dbReference>
<dbReference type="SMR" id="P9WIW3"/>
<dbReference type="FunCoup" id="P9WIW3">
    <property type="interactions" value="6"/>
</dbReference>
<dbReference type="STRING" id="83332.Rv0083"/>
<dbReference type="PaxDb" id="83332-Rv0083"/>
<dbReference type="GeneID" id="886965"/>
<dbReference type="KEGG" id="mtu:Rv0083"/>
<dbReference type="KEGG" id="mtv:RVBD_0083"/>
<dbReference type="TubercuList" id="Rv0083"/>
<dbReference type="eggNOG" id="COG0651">
    <property type="taxonomic scope" value="Bacteria"/>
</dbReference>
<dbReference type="InParanoid" id="P9WIW3"/>
<dbReference type="OrthoDB" id="9768329at2"/>
<dbReference type="PhylomeDB" id="P9WIW3"/>
<dbReference type="Proteomes" id="UP000001584">
    <property type="component" value="Chromosome"/>
</dbReference>
<dbReference type="GO" id="GO:0005886">
    <property type="term" value="C:plasma membrane"/>
    <property type="evidence" value="ECO:0007669"/>
    <property type="project" value="UniProtKB-SubCell"/>
</dbReference>
<dbReference type="GO" id="GO:0008137">
    <property type="term" value="F:NADH dehydrogenase (ubiquinone) activity"/>
    <property type="evidence" value="ECO:0007669"/>
    <property type="project" value="InterPro"/>
</dbReference>
<dbReference type="GO" id="GO:0042773">
    <property type="term" value="P:ATP synthesis coupled electron transport"/>
    <property type="evidence" value="ECO:0007669"/>
    <property type="project" value="InterPro"/>
</dbReference>
<dbReference type="InterPro" id="IPR052175">
    <property type="entry name" value="ComplexI-like_HydComp"/>
</dbReference>
<dbReference type="InterPro" id="IPR003918">
    <property type="entry name" value="NADH_UbQ_OxRdtase"/>
</dbReference>
<dbReference type="InterPro" id="IPR001750">
    <property type="entry name" value="ND/Mrp_TM"/>
</dbReference>
<dbReference type="PANTHER" id="PTHR42682:SF3">
    <property type="entry name" value="FORMATE HYDROGENLYASE SUBUNIT 3-RELATED"/>
    <property type="match status" value="1"/>
</dbReference>
<dbReference type="PANTHER" id="PTHR42682">
    <property type="entry name" value="HYDROGENASE-4 COMPONENT F"/>
    <property type="match status" value="1"/>
</dbReference>
<dbReference type="Pfam" id="PF00361">
    <property type="entry name" value="Proton_antipo_M"/>
    <property type="match status" value="1"/>
</dbReference>
<dbReference type="PRINTS" id="PR01437">
    <property type="entry name" value="NUOXDRDTASE4"/>
</dbReference>
<accession>P9WIW3</accession>
<accession>L0T497</accession>
<accession>O53628</accession>
<accession>Q10880</accession>
<name>Y051_MYCTU</name>
<gene>
    <name type="ordered locus">Rv0083</name>
    <name type="ORF">MTCY251.01</name>
    <name type="ORF">MTV030.27</name>
</gene>
<comment type="subcellular location">
    <subcellularLocation>
        <location evidence="2">Cell membrane</location>
        <topology evidence="2">Multi-pass membrane protein</topology>
    </subcellularLocation>
</comment>
<comment type="similarity">
    <text evidence="2">Belongs to the complex I subunit 4 family.</text>
</comment>
<keyword id="KW-1003">Cell membrane</keyword>
<keyword id="KW-0472">Membrane</keyword>
<keyword id="KW-0560">Oxidoreductase</keyword>
<keyword id="KW-1185">Reference proteome</keyword>
<keyword id="KW-0812">Transmembrane</keyword>
<keyword id="KW-1133">Transmembrane helix</keyword>
<evidence type="ECO:0000255" key="1"/>
<evidence type="ECO:0000305" key="2"/>
<sequence>MTAAPTAGGVVTSGVGVAGVGVGLLGMFGPVRVVHVGWLLPLSGVHIELDRLGGFFMALTGAVAAPVGCYLIGYVRREHLGRVPMAVVPLFVAAMLLVPAAGSVTTFLLAWELMAIASLILVLSEHARPQVRSAGLWYAVMTQLGFIAILVGLVVLAAAGGSDRFAGLGAVCDGVRAAVFMLTLVGFGSKAGLVPLHAWLPRAHPEAPSPVSALMSAAMVNLGIYGIVRFDLQLLGPGPRWWGLALLAVGGTSALYGVLQASVAADLKRLLAYSTTENMGLITLALGAATLFADTGAYGPASIAAAAAMLHMIAHAAFKSLAFMAAGSVLAATGLRDLDLLGGLARRMPATTVFFGVAALGACGLPLGAGFVSEWLLVQSLIHAAPGHDPIVALTTPLAVGVVALATGLSVAAMTKAFGIGFLARPRSTQAEAAREAPASMRAGMAIAAGACLVLAVAPLLVAPMVRRAAATLPAAQAVKFTGLGAVVRLPAMSGSIAPGVIAAAVLAAALAVAVLARWRFRRRPAPARLPLWACGAADLTVRMQYTATSFAEPLQRVFGDVLRPDTDIEVTHTAESRYMAERITYRTAVADAIEQRLYTPVVGAVAAMAELLRRAHTGSVHRYLAYGALGVLIVLVVAR</sequence>